<protein>
    <recommendedName>
        <fullName>Probable protein E5</fullName>
    </recommendedName>
</protein>
<sequence length="91" mass="10246">MEFIPVDVSTQATSKSLLPLVIALTVCVVSIITILCISEFLVYTNVLVLTLILYVLLWLLLTTPLQFYLLTLSLCFLPALCVHQYILQTQE</sequence>
<proteinExistence type="inferred from homology"/>
<organism>
    <name type="scientific">Human papillomavirus 13</name>
    <dbReference type="NCBI Taxonomy" id="10573"/>
    <lineage>
        <taxon>Viruses</taxon>
        <taxon>Monodnaviria</taxon>
        <taxon>Shotokuvirae</taxon>
        <taxon>Cossaviricota</taxon>
        <taxon>Papovaviricetes</taxon>
        <taxon>Zurhausenvirales</taxon>
        <taxon>Papillomaviridae</taxon>
        <taxon>Firstpapillomavirinae</taxon>
        <taxon>Alphapapillomavirus</taxon>
        <taxon>Alphapapillomavirus 10</taxon>
    </lineage>
</organism>
<dbReference type="EMBL" id="X62843">
    <property type="protein sequence ID" value="CAA44652.1"/>
    <property type="molecule type" value="Genomic_DNA"/>
</dbReference>
<dbReference type="PIR" id="F42955">
    <property type="entry name" value="W5WL13"/>
</dbReference>
<dbReference type="SMR" id="Q02267"/>
<dbReference type="Proteomes" id="UP000009107">
    <property type="component" value="Genome"/>
</dbReference>
<dbReference type="InterPro" id="IPR004270">
    <property type="entry name" value="Papilloma_E5_alpha"/>
</dbReference>
<dbReference type="Pfam" id="PF03025">
    <property type="entry name" value="Papilloma_E5"/>
    <property type="match status" value="1"/>
</dbReference>
<reference key="1">
    <citation type="journal article" date="1992" name="Virology">
        <title>Human papillomavirus type 13 and pygmy chimpanzee papillomavirus type 1: comparison of the genome organizations.</title>
        <authorList>
            <person name="van Ranst M."/>
            <person name="Fuse A."/>
            <person name="Fiten P."/>
            <person name="Beuken E."/>
            <person name="Pfister H."/>
            <person name="Burk R.D."/>
            <person name="Opdenakker G."/>
        </authorList>
    </citation>
    <scope>NUCLEOTIDE SEQUENCE [GENOMIC DNA]</scope>
</reference>
<gene>
    <name type="primary">E5</name>
</gene>
<comment type="similarity">
    <text evidence="1">Belongs to the papillomaviridae E5 protein family.</text>
</comment>
<organismHost>
    <name type="scientific">Homo sapiens</name>
    <name type="common">Human</name>
    <dbReference type="NCBI Taxonomy" id="9606"/>
</organismHost>
<keyword id="KW-0244">Early protein</keyword>
<evidence type="ECO:0000305" key="1"/>
<feature type="chain" id="PRO_0000133288" description="Probable protein E5">
    <location>
        <begin position="1"/>
        <end position="91"/>
    </location>
</feature>
<accession>Q02267</accession>
<name>VE5_HPV13</name>